<name>HTPX_ACIBY</name>
<organism>
    <name type="scientific">Acinetobacter baumannii (strain AYE)</name>
    <dbReference type="NCBI Taxonomy" id="509173"/>
    <lineage>
        <taxon>Bacteria</taxon>
        <taxon>Pseudomonadati</taxon>
        <taxon>Pseudomonadota</taxon>
        <taxon>Gammaproteobacteria</taxon>
        <taxon>Moraxellales</taxon>
        <taxon>Moraxellaceae</taxon>
        <taxon>Acinetobacter</taxon>
        <taxon>Acinetobacter calcoaceticus/baumannii complex</taxon>
    </lineage>
</organism>
<keyword id="KW-0997">Cell inner membrane</keyword>
<keyword id="KW-1003">Cell membrane</keyword>
<keyword id="KW-0378">Hydrolase</keyword>
<keyword id="KW-0472">Membrane</keyword>
<keyword id="KW-0479">Metal-binding</keyword>
<keyword id="KW-0482">Metalloprotease</keyword>
<keyword id="KW-0645">Protease</keyword>
<keyword id="KW-0346">Stress response</keyword>
<keyword id="KW-0812">Transmembrane</keyword>
<keyword id="KW-1133">Transmembrane helix</keyword>
<keyword id="KW-0862">Zinc</keyword>
<gene>
    <name evidence="1" type="primary">htpX</name>
    <name type="ordered locus">ABAYE0829</name>
</gene>
<proteinExistence type="inferred from homology"/>
<reference key="1">
    <citation type="journal article" date="2008" name="PLoS ONE">
        <title>Comparative analysis of Acinetobacters: three genomes for three lifestyles.</title>
        <authorList>
            <person name="Vallenet D."/>
            <person name="Nordmann P."/>
            <person name="Barbe V."/>
            <person name="Poirel L."/>
            <person name="Mangenot S."/>
            <person name="Bataille E."/>
            <person name="Dossat C."/>
            <person name="Gas S."/>
            <person name="Kreimeyer A."/>
            <person name="Lenoble P."/>
            <person name="Oztas S."/>
            <person name="Poulain J."/>
            <person name="Segurens B."/>
            <person name="Robert C."/>
            <person name="Abergel C."/>
            <person name="Claverie J.-M."/>
            <person name="Raoult D."/>
            <person name="Medigue C."/>
            <person name="Weissenbach J."/>
            <person name="Cruveiller S."/>
        </authorList>
    </citation>
    <scope>NUCLEOTIDE SEQUENCE [LARGE SCALE GENOMIC DNA]</scope>
    <source>
        <strain>AYE</strain>
    </source>
</reference>
<comment type="cofactor">
    <cofactor evidence="1">
        <name>Zn(2+)</name>
        <dbReference type="ChEBI" id="CHEBI:29105"/>
    </cofactor>
    <text evidence="1">Binds 1 zinc ion per subunit.</text>
</comment>
<comment type="subcellular location">
    <subcellularLocation>
        <location evidence="1">Cell inner membrane</location>
        <topology evidence="1">Multi-pass membrane protein</topology>
    </subcellularLocation>
</comment>
<comment type="similarity">
    <text evidence="1">Belongs to the peptidase M48B family.</text>
</comment>
<sequence length="301" mass="32819">MMRIGLFLLTNLAVLVVAGIILSLFGVGSYHGAGGLNLGNLLVICFVFGMVGSLVSLFMSKWMAKKTTGTELIDPNAPRNQAESWLLQTVAELSQRAGINMPEVGIFPSYQSNAFATGWNKNDALVAVSSGLLERMNKDELRAVLAHEIGHVANGDMVTLALIQGVVNAFVMFFARVVGDFIDRNVFGRQDNEAPGMGYFIITMVLDIVFGILASAIVMWFSRYREYRADEAGARLAGKQAMISALLRLQAETELPDQMPKEMKAFAIAEGKEQGFSLAALFQTHPTIEQRVAALHQLDCP</sequence>
<feature type="chain" id="PRO_1000098801" description="Protease HtpX">
    <location>
        <begin position="1"/>
        <end position="301"/>
    </location>
</feature>
<feature type="transmembrane region" description="Helical" evidence="1">
    <location>
        <begin position="4"/>
        <end position="24"/>
    </location>
</feature>
<feature type="transmembrane region" description="Helical" evidence="1">
    <location>
        <begin position="38"/>
        <end position="58"/>
    </location>
</feature>
<feature type="transmembrane region" description="Helical" evidence="1">
    <location>
        <begin position="155"/>
        <end position="175"/>
    </location>
</feature>
<feature type="transmembrane region" description="Helical" evidence="1">
    <location>
        <begin position="200"/>
        <end position="220"/>
    </location>
</feature>
<feature type="active site" evidence="1">
    <location>
        <position position="148"/>
    </location>
</feature>
<feature type="binding site" evidence="1">
    <location>
        <position position="147"/>
    </location>
    <ligand>
        <name>Zn(2+)</name>
        <dbReference type="ChEBI" id="CHEBI:29105"/>
        <note>catalytic</note>
    </ligand>
</feature>
<feature type="binding site" evidence="1">
    <location>
        <position position="151"/>
    </location>
    <ligand>
        <name>Zn(2+)</name>
        <dbReference type="ChEBI" id="CHEBI:29105"/>
        <note>catalytic</note>
    </ligand>
</feature>
<feature type="binding site" evidence="1">
    <location>
        <position position="226"/>
    </location>
    <ligand>
        <name>Zn(2+)</name>
        <dbReference type="ChEBI" id="CHEBI:29105"/>
        <note>catalytic</note>
    </ligand>
</feature>
<protein>
    <recommendedName>
        <fullName evidence="1">Protease HtpX</fullName>
        <ecNumber evidence="1">3.4.24.-</ecNumber>
    </recommendedName>
    <alternativeName>
        <fullName evidence="1">Heat shock protein HtpX</fullName>
    </alternativeName>
</protein>
<evidence type="ECO:0000255" key="1">
    <source>
        <dbReference type="HAMAP-Rule" id="MF_00188"/>
    </source>
</evidence>
<accession>B0VDQ0</accession>
<dbReference type="EC" id="3.4.24.-" evidence="1"/>
<dbReference type="EMBL" id="CU459141">
    <property type="protein sequence ID" value="CAM85782.1"/>
    <property type="molecule type" value="Genomic_DNA"/>
</dbReference>
<dbReference type="RefSeq" id="WP_000984535.1">
    <property type="nucleotide sequence ID" value="NZ_JBDGFB010000021.1"/>
</dbReference>
<dbReference type="SMR" id="B0VDQ0"/>
<dbReference type="MEROPS" id="M48.002"/>
<dbReference type="EnsemblBacteria" id="CAM85782">
    <property type="protein sequence ID" value="CAM85782"/>
    <property type="gene ID" value="ABAYE0829"/>
</dbReference>
<dbReference type="GeneID" id="92894933"/>
<dbReference type="KEGG" id="aby:ABAYE0829"/>
<dbReference type="HOGENOM" id="CLU_042266_1_0_6"/>
<dbReference type="GO" id="GO:0005886">
    <property type="term" value="C:plasma membrane"/>
    <property type="evidence" value="ECO:0007669"/>
    <property type="project" value="UniProtKB-SubCell"/>
</dbReference>
<dbReference type="GO" id="GO:0004222">
    <property type="term" value="F:metalloendopeptidase activity"/>
    <property type="evidence" value="ECO:0007669"/>
    <property type="project" value="UniProtKB-UniRule"/>
</dbReference>
<dbReference type="GO" id="GO:0008270">
    <property type="term" value="F:zinc ion binding"/>
    <property type="evidence" value="ECO:0007669"/>
    <property type="project" value="UniProtKB-UniRule"/>
</dbReference>
<dbReference type="GO" id="GO:0006508">
    <property type="term" value="P:proteolysis"/>
    <property type="evidence" value="ECO:0007669"/>
    <property type="project" value="UniProtKB-KW"/>
</dbReference>
<dbReference type="CDD" id="cd07335">
    <property type="entry name" value="M48B_HtpX_like"/>
    <property type="match status" value="1"/>
</dbReference>
<dbReference type="Gene3D" id="3.30.2010.10">
    <property type="entry name" value="Metalloproteases ('zincins'), catalytic domain"/>
    <property type="match status" value="1"/>
</dbReference>
<dbReference type="HAMAP" id="MF_00188">
    <property type="entry name" value="Pept_M48_protease_HtpX"/>
    <property type="match status" value="1"/>
</dbReference>
<dbReference type="InterPro" id="IPR050083">
    <property type="entry name" value="HtpX_protease"/>
</dbReference>
<dbReference type="InterPro" id="IPR022919">
    <property type="entry name" value="Pept_M48_protease_HtpX"/>
</dbReference>
<dbReference type="InterPro" id="IPR001915">
    <property type="entry name" value="Peptidase_M48"/>
</dbReference>
<dbReference type="NCBIfam" id="NF003965">
    <property type="entry name" value="PRK05457.1"/>
    <property type="match status" value="1"/>
</dbReference>
<dbReference type="PANTHER" id="PTHR43221">
    <property type="entry name" value="PROTEASE HTPX"/>
    <property type="match status" value="1"/>
</dbReference>
<dbReference type="PANTHER" id="PTHR43221:SF1">
    <property type="entry name" value="PROTEASE HTPX"/>
    <property type="match status" value="1"/>
</dbReference>
<dbReference type="Pfam" id="PF01435">
    <property type="entry name" value="Peptidase_M48"/>
    <property type="match status" value="1"/>
</dbReference>